<evidence type="ECO:0000250" key="1"/>
<evidence type="ECO:0000255" key="2"/>
<evidence type="ECO:0000255" key="3">
    <source>
        <dbReference type="PROSITE-ProRule" id="PRU00175"/>
    </source>
</evidence>
<evidence type="ECO:0000305" key="4"/>
<organism>
    <name type="scientific">Gallus gallus</name>
    <name type="common">Chicken</name>
    <dbReference type="NCBI Taxonomy" id="9031"/>
    <lineage>
        <taxon>Eukaryota</taxon>
        <taxon>Metazoa</taxon>
        <taxon>Chordata</taxon>
        <taxon>Craniata</taxon>
        <taxon>Vertebrata</taxon>
        <taxon>Euteleostomi</taxon>
        <taxon>Archelosauria</taxon>
        <taxon>Archosauria</taxon>
        <taxon>Dinosauria</taxon>
        <taxon>Saurischia</taxon>
        <taxon>Theropoda</taxon>
        <taxon>Coelurosauria</taxon>
        <taxon>Aves</taxon>
        <taxon>Neognathae</taxon>
        <taxon>Galloanserae</taxon>
        <taxon>Galliformes</taxon>
        <taxon>Phasianidae</taxon>
        <taxon>Phasianinae</taxon>
        <taxon>Gallus</taxon>
    </lineage>
</organism>
<name>RAPSN_CHICK</name>
<proteinExistence type="evidence at transcript level"/>
<protein>
    <recommendedName>
        <fullName>43 kDa receptor-associated protein of the synapse</fullName>
        <shortName>RAPsyn</shortName>
    </recommendedName>
    <alternativeName>
        <fullName>43 kDa postsynaptic protein</fullName>
    </alternativeName>
    <alternativeName>
        <fullName>Acetylcholine receptor-associated 43 kDa protein</fullName>
    </alternativeName>
</protein>
<accession>O42393</accession>
<gene>
    <name type="primary">RAPSN</name>
</gene>
<reference key="1">
    <citation type="journal article" date="1997" name="J. Neurosci.">
        <title>Chick ciliary ganglion neurons contain transcripts coding for acetylcholine receptor-associated protein at synapses (rapsyn).</title>
        <authorList>
            <person name="Burns A.L."/>
            <person name="Benson D."/>
            <person name="Howard M.J."/>
            <person name="Margiotta J.F."/>
        </authorList>
    </citation>
    <scope>NUCLEOTIDE SEQUENCE [MRNA]</scope>
    <source>
        <strain>C</strain>
    </source>
</reference>
<feature type="initiator methionine" description="Removed" evidence="1">
    <location>
        <position position="1"/>
    </location>
</feature>
<feature type="chain" id="PRO_0000167593" description="43 kDa receptor-associated protein of the synapse">
    <location>
        <begin position="2"/>
        <end position="412"/>
    </location>
</feature>
<feature type="repeat" description="TPR 1">
    <location>
        <begin position="6"/>
        <end position="39"/>
    </location>
</feature>
<feature type="repeat" description="TPR 2">
    <location>
        <begin position="83"/>
        <end position="116"/>
    </location>
</feature>
<feature type="repeat" description="TPR 3">
    <location>
        <begin position="123"/>
        <end position="156"/>
    </location>
</feature>
<feature type="repeat" description="TPR 4">
    <location>
        <begin position="163"/>
        <end position="196"/>
    </location>
</feature>
<feature type="repeat" description="TPR 5">
    <location>
        <begin position="206"/>
        <end position="239"/>
    </location>
</feature>
<feature type="repeat" description="TPR 6">
    <location>
        <begin position="246"/>
        <end position="279"/>
    </location>
</feature>
<feature type="repeat" description="TPR 7">
    <location>
        <begin position="286"/>
        <end position="319"/>
    </location>
</feature>
<feature type="zinc finger region" description="RING-type" evidence="3">
    <location>
        <begin position="363"/>
        <end position="403"/>
    </location>
</feature>
<feature type="modified residue" description="Phosphotyrosine" evidence="2">
    <location>
        <position position="196"/>
    </location>
</feature>
<feature type="lipid moiety-binding region" description="N-myristoyl glycine" evidence="1">
    <location>
        <position position="2"/>
    </location>
</feature>
<sequence>MGQDQTKQQIEKGLHLYQSNQTEKALQVWMRVLEKSADPAGRFRVLGCLITAHAEMGRYKDMLKFAVVQIDTARELEDPNYLTEGYLNLARSNEKLCEFQKTISYCKTCLNMQGTTVSLQLNGQVSLSMGNAFLGLSIFQKALECFEKALRYAHNNDDKMLECRVCCSLGNFYAQIKDYEKALFFPCKAAELVNDYGAGWSLKYRAMSQYHMAVAYRKLGRLADAMDCCEESMKIALQHGDRPLQALCLLCFADIHLSRRDVQTAFPRYDSAMSIMTEIGNRLGQIQVLLGVAKCWMIQKELDKALESIEKAQELAEGLGNKLGLLKLHCLCERIYRTKGLQQELRDHVVKFHECVEEMELYCGMCGESIGEKNNQLQALPCSHFFHLKCLQTNGTRGCPNCRRLSVKPGYV</sequence>
<comment type="function">
    <text evidence="1">Postsynaptic protein required for clustering of nicotinic acetylcholine receptors (nAChRs) at the neuromuscular junction. It may link the receptor to the underlying postsynaptic cytoskeleton, possibly by direct association with actin or spectrin (By similarity).</text>
</comment>
<comment type="subcellular location">
    <subcellularLocation>
        <location>Cell membrane</location>
        <topology>Peripheral membrane protein</topology>
        <orientation>Cytoplasmic side</orientation>
    </subcellularLocation>
    <subcellularLocation>
        <location>Postsynaptic cell membrane</location>
        <topology>Peripheral membrane protein</topology>
        <orientation>Cytoplasmic side</orientation>
    </subcellularLocation>
    <subcellularLocation>
        <location>Cytoplasm</location>
        <location>Cytoskeleton</location>
    </subcellularLocation>
    <text>Cytoplasmic surface of postsynaptic membranes.</text>
</comment>
<comment type="tissue specificity">
    <text>Expressed in muscle fibers and in neurons.</text>
</comment>
<comment type="domain">
    <text>A cysteine-rich region homologous to part of the regulatory domain of protein kinase C may be important in interactions of this protein with the lipid bilayer.</text>
</comment>
<comment type="similarity">
    <text evidence="4">Belongs to the RAPsyn family.</text>
</comment>
<dbReference type="EMBL" id="AF000138">
    <property type="protein sequence ID" value="AAB63149.1"/>
    <property type="molecule type" value="mRNA"/>
</dbReference>
<dbReference type="RefSeq" id="NP_990428.1">
    <property type="nucleotide sequence ID" value="NM_205097.1"/>
</dbReference>
<dbReference type="SMR" id="O42393"/>
<dbReference type="FunCoup" id="O42393">
    <property type="interactions" value="48"/>
</dbReference>
<dbReference type="STRING" id="9031.ENSGALP00000013132"/>
<dbReference type="PaxDb" id="9031-ENSGALP00000013132"/>
<dbReference type="GeneID" id="395986"/>
<dbReference type="KEGG" id="gga:395986"/>
<dbReference type="CTD" id="5913"/>
<dbReference type="VEuPathDB" id="HostDB:geneid_395986"/>
<dbReference type="eggNOG" id="KOG1941">
    <property type="taxonomic scope" value="Eukaryota"/>
</dbReference>
<dbReference type="InParanoid" id="O42393"/>
<dbReference type="OrthoDB" id="10040854at2759"/>
<dbReference type="PhylomeDB" id="O42393"/>
<dbReference type="PRO" id="PR:O42393"/>
<dbReference type="Proteomes" id="UP000000539">
    <property type="component" value="Unassembled WGS sequence"/>
</dbReference>
<dbReference type="GO" id="GO:0005737">
    <property type="term" value="C:cytoplasm"/>
    <property type="evidence" value="ECO:0007669"/>
    <property type="project" value="UniProtKB-KW"/>
</dbReference>
<dbReference type="GO" id="GO:0005856">
    <property type="term" value="C:cytoskeleton"/>
    <property type="evidence" value="ECO:0007669"/>
    <property type="project" value="UniProtKB-SubCell"/>
</dbReference>
<dbReference type="GO" id="GO:0031594">
    <property type="term" value="C:neuromuscular junction"/>
    <property type="evidence" value="ECO:0000318"/>
    <property type="project" value="GO_Central"/>
</dbReference>
<dbReference type="GO" id="GO:0005886">
    <property type="term" value="C:plasma membrane"/>
    <property type="evidence" value="ECO:0000318"/>
    <property type="project" value="GO_Central"/>
</dbReference>
<dbReference type="GO" id="GO:0045211">
    <property type="term" value="C:postsynaptic membrane"/>
    <property type="evidence" value="ECO:0007669"/>
    <property type="project" value="UniProtKB-SubCell"/>
</dbReference>
<dbReference type="GO" id="GO:0033130">
    <property type="term" value="F:acetylcholine receptor binding"/>
    <property type="evidence" value="ECO:0000318"/>
    <property type="project" value="GO_Central"/>
</dbReference>
<dbReference type="GO" id="GO:0043495">
    <property type="term" value="F:protein-membrane adaptor activity"/>
    <property type="evidence" value="ECO:0007669"/>
    <property type="project" value="InterPro"/>
</dbReference>
<dbReference type="GO" id="GO:0008270">
    <property type="term" value="F:zinc ion binding"/>
    <property type="evidence" value="ECO:0007669"/>
    <property type="project" value="UniProtKB-KW"/>
</dbReference>
<dbReference type="GO" id="GO:1900075">
    <property type="term" value="P:positive regulation of neuromuscular synaptic transmission"/>
    <property type="evidence" value="ECO:0000318"/>
    <property type="project" value="GO_Central"/>
</dbReference>
<dbReference type="GO" id="GO:0007271">
    <property type="term" value="P:synaptic transmission, cholinergic"/>
    <property type="evidence" value="ECO:0000318"/>
    <property type="project" value="GO_Central"/>
</dbReference>
<dbReference type="CDD" id="cd16478">
    <property type="entry name" value="RING-H2_Rapsyn"/>
    <property type="match status" value="1"/>
</dbReference>
<dbReference type="FunFam" id="1.25.40.10:FF:000123">
    <property type="entry name" value="43 kDa receptor-associated protein of the synapse"/>
    <property type="match status" value="1"/>
</dbReference>
<dbReference type="FunFam" id="1.25.40.10:FF:000206">
    <property type="entry name" value="43 kDa receptor-associated protein of the synapse"/>
    <property type="match status" value="1"/>
</dbReference>
<dbReference type="Gene3D" id="1.25.40.10">
    <property type="entry name" value="Tetratricopeptide repeat domain"/>
    <property type="match status" value="2"/>
</dbReference>
<dbReference type="Gene3D" id="3.30.40.10">
    <property type="entry name" value="Zinc/RING finger domain, C3HC4 (zinc finger)"/>
    <property type="match status" value="1"/>
</dbReference>
<dbReference type="InterPro" id="IPR001237">
    <property type="entry name" value="Postsynaptic"/>
</dbReference>
<dbReference type="InterPro" id="IPR018293">
    <property type="entry name" value="Postsynaptic_CS"/>
</dbReference>
<dbReference type="InterPro" id="IPR052480">
    <property type="entry name" value="RAPsyn"/>
</dbReference>
<dbReference type="InterPro" id="IPR019568">
    <property type="entry name" value="Rapsyn_myristoylation/link_N"/>
</dbReference>
<dbReference type="InterPro" id="IPR011990">
    <property type="entry name" value="TPR-like_helical_dom_sf"/>
</dbReference>
<dbReference type="InterPro" id="IPR019734">
    <property type="entry name" value="TPR_rpt"/>
</dbReference>
<dbReference type="InterPro" id="IPR001841">
    <property type="entry name" value="Znf_RING"/>
</dbReference>
<dbReference type="InterPro" id="IPR013083">
    <property type="entry name" value="Znf_RING/FYVE/PHD"/>
</dbReference>
<dbReference type="PANTHER" id="PTHR46574">
    <property type="entry name" value="43 KDA RECEPTOR-ASSOCIATED PROTEIN OF THE SYNAPSE"/>
    <property type="match status" value="1"/>
</dbReference>
<dbReference type="PANTHER" id="PTHR46574:SF1">
    <property type="entry name" value="43 KDA RECEPTOR-ASSOCIATED PROTEIN OF THE SYNAPSE"/>
    <property type="match status" value="1"/>
</dbReference>
<dbReference type="Pfam" id="PF10579">
    <property type="entry name" value="Rapsyn_N"/>
    <property type="match status" value="1"/>
</dbReference>
<dbReference type="Pfam" id="PF13181">
    <property type="entry name" value="TPR_8"/>
    <property type="match status" value="1"/>
</dbReference>
<dbReference type="Pfam" id="PF13639">
    <property type="entry name" value="zf-RING_2"/>
    <property type="match status" value="1"/>
</dbReference>
<dbReference type="PRINTS" id="PR00217">
    <property type="entry name" value="POSTSYNAPTIC"/>
</dbReference>
<dbReference type="SMART" id="SM00184">
    <property type="entry name" value="RING"/>
    <property type="match status" value="1"/>
</dbReference>
<dbReference type="SMART" id="SM00028">
    <property type="entry name" value="TPR"/>
    <property type="match status" value="6"/>
</dbReference>
<dbReference type="SUPFAM" id="SSF57850">
    <property type="entry name" value="RING/U-box"/>
    <property type="match status" value="1"/>
</dbReference>
<dbReference type="SUPFAM" id="SSF48452">
    <property type="entry name" value="TPR-like"/>
    <property type="match status" value="2"/>
</dbReference>
<dbReference type="PROSITE" id="PS00405">
    <property type="entry name" value="43_KD_POSTSYNAPTIC"/>
    <property type="match status" value="1"/>
</dbReference>
<dbReference type="PROSITE" id="PS50005">
    <property type="entry name" value="TPR"/>
    <property type="match status" value="5"/>
</dbReference>
<dbReference type="PROSITE" id="PS50293">
    <property type="entry name" value="TPR_REGION"/>
    <property type="match status" value="1"/>
</dbReference>
<dbReference type="PROSITE" id="PS50089">
    <property type="entry name" value="ZF_RING_2"/>
    <property type="match status" value="1"/>
</dbReference>
<keyword id="KW-1003">Cell membrane</keyword>
<keyword id="KW-0963">Cytoplasm</keyword>
<keyword id="KW-0206">Cytoskeleton</keyword>
<keyword id="KW-0449">Lipoprotein</keyword>
<keyword id="KW-0472">Membrane</keyword>
<keyword id="KW-0479">Metal-binding</keyword>
<keyword id="KW-0519">Myristate</keyword>
<keyword id="KW-0597">Phosphoprotein</keyword>
<keyword id="KW-0628">Postsynaptic cell membrane</keyword>
<keyword id="KW-1185">Reference proteome</keyword>
<keyword id="KW-0677">Repeat</keyword>
<keyword id="KW-0770">Synapse</keyword>
<keyword id="KW-0802">TPR repeat</keyword>
<keyword id="KW-0862">Zinc</keyword>
<keyword id="KW-0863">Zinc-finger</keyword>